<organism>
    <name type="scientific">Acanthamoeba polyphaga mimivirus</name>
    <name type="common">APMV</name>
    <dbReference type="NCBI Taxonomy" id="212035"/>
    <lineage>
        <taxon>Viruses</taxon>
        <taxon>Varidnaviria</taxon>
        <taxon>Bamfordvirae</taxon>
        <taxon>Nucleocytoviricota</taxon>
        <taxon>Megaviricetes</taxon>
        <taxon>Imitervirales</taxon>
        <taxon>Mimiviridae</taxon>
        <taxon>Megamimivirinae</taxon>
        <taxon>Mimivirus</taxon>
        <taxon>Mimivirus bradfordmassiliense</taxon>
    </lineage>
</organism>
<name>YR864_MIMIV</name>
<feature type="chain" id="PRO_0000067218" description="Putative ankyrin repeat protein R864">
    <location>
        <begin position="1"/>
        <end position="299"/>
    </location>
</feature>
<feature type="repeat" description="ANK 1">
    <location>
        <begin position="78"/>
        <end position="107"/>
    </location>
</feature>
<feature type="repeat" description="ANK 2">
    <location>
        <begin position="108"/>
        <end position="137"/>
    </location>
</feature>
<feature type="repeat" description="ANK 3">
    <location>
        <begin position="139"/>
        <end position="167"/>
    </location>
</feature>
<feature type="repeat" description="ANK 4">
    <location>
        <begin position="168"/>
        <end position="197"/>
    </location>
</feature>
<feature type="repeat" description="ANK 5">
    <location>
        <begin position="199"/>
        <end position="227"/>
    </location>
</feature>
<feature type="repeat" description="ANK 6">
    <location>
        <begin position="228"/>
        <end position="257"/>
    </location>
</feature>
<feature type="repeat" description="ANK 7">
    <location>
        <begin position="258"/>
        <end position="287"/>
    </location>
</feature>
<accession>Q5UP19</accession>
<dbReference type="EMBL" id="AY653733">
    <property type="protein sequence ID" value="AAV51122.1"/>
    <property type="molecule type" value="Genomic_DNA"/>
</dbReference>
<dbReference type="SMR" id="Q5UP19"/>
<dbReference type="KEGG" id="vg:9925526"/>
<dbReference type="OrthoDB" id="269at10240"/>
<dbReference type="Proteomes" id="UP000001134">
    <property type="component" value="Genome"/>
</dbReference>
<dbReference type="Gene3D" id="1.25.40.20">
    <property type="entry name" value="Ankyrin repeat-containing domain"/>
    <property type="match status" value="3"/>
</dbReference>
<dbReference type="InterPro" id="IPR002110">
    <property type="entry name" value="Ankyrin_rpt"/>
</dbReference>
<dbReference type="InterPro" id="IPR036770">
    <property type="entry name" value="Ankyrin_rpt-contain_sf"/>
</dbReference>
<dbReference type="PANTHER" id="PTHR24188">
    <property type="entry name" value="ANKYRIN REPEAT PROTEIN"/>
    <property type="match status" value="1"/>
</dbReference>
<dbReference type="PANTHER" id="PTHR24188:SF29">
    <property type="entry name" value="GH09064P"/>
    <property type="match status" value="1"/>
</dbReference>
<dbReference type="Pfam" id="PF00023">
    <property type="entry name" value="Ank"/>
    <property type="match status" value="1"/>
</dbReference>
<dbReference type="Pfam" id="PF12796">
    <property type="entry name" value="Ank_2"/>
    <property type="match status" value="2"/>
</dbReference>
<dbReference type="SMART" id="SM00248">
    <property type="entry name" value="ANK"/>
    <property type="match status" value="7"/>
</dbReference>
<dbReference type="SUPFAM" id="SSF48403">
    <property type="entry name" value="Ankyrin repeat"/>
    <property type="match status" value="1"/>
</dbReference>
<dbReference type="PROSITE" id="PS50297">
    <property type="entry name" value="ANK_REP_REGION"/>
    <property type="match status" value="1"/>
</dbReference>
<dbReference type="PROSITE" id="PS50088">
    <property type="entry name" value="ANK_REPEAT"/>
    <property type="match status" value="5"/>
</dbReference>
<sequence length="299" mass="33293">MYDILPPELWIKIVDYSGEINLLLTSINFFELFNLVDVKVNVIEYIIENELIDVLKHIVVLKNLKHPIMGKNIISIESLNKCLLDSCNKGQLKIVQHLINIGANIESNNNYAVLLASGGGHLEVVKYLVSQGANIKSKNNRVVGWASQHGRLEVVKYLVSLGADIRSNDDYAVRWASEHGHLEVAKYLVSLGADIRSKYYYILCGASQNGYLEIIKYIVSLGADIRAYNNCAVKWASQCGHIDIVKYLASQGADIRNDNDYCVGLASKNGHIEVVKYLVSQGADIKTYNDHAVKVASKK</sequence>
<proteinExistence type="predicted"/>
<keyword id="KW-0040">ANK repeat</keyword>
<keyword id="KW-1185">Reference proteome</keyword>
<keyword id="KW-0677">Repeat</keyword>
<protein>
    <recommendedName>
        <fullName>Putative ankyrin repeat protein R864</fullName>
    </recommendedName>
</protein>
<organismHost>
    <name type="scientific">Acanthamoeba polyphaga</name>
    <name type="common">Amoeba</name>
    <dbReference type="NCBI Taxonomy" id="5757"/>
</organismHost>
<reference key="1">
    <citation type="journal article" date="2004" name="Science">
        <title>The 1.2-megabase genome sequence of Mimivirus.</title>
        <authorList>
            <person name="Raoult D."/>
            <person name="Audic S."/>
            <person name="Robert C."/>
            <person name="Abergel C."/>
            <person name="Renesto P."/>
            <person name="Ogata H."/>
            <person name="La Scola B."/>
            <person name="Susan M."/>
            <person name="Claverie J.-M."/>
        </authorList>
    </citation>
    <scope>NUCLEOTIDE SEQUENCE [LARGE SCALE GENOMIC DNA]</scope>
    <source>
        <strain>Rowbotham-Bradford</strain>
    </source>
</reference>
<gene>
    <name type="ordered locus">MIMI_L864</name>
</gene>